<keyword id="KW-0002">3D-structure</keyword>
<keyword id="KW-1015">Disulfide bond</keyword>
<keyword id="KW-0378">Hydrolase</keyword>
<keyword id="KW-0645">Protease</keyword>
<keyword id="KW-0964">Secreted</keyword>
<keyword id="KW-0720">Serine protease</keyword>
<comment type="function">
    <text>Broad substrate specificity.</text>
</comment>
<comment type="subcellular location">
    <subcellularLocation>
        <location>Secreted</location>
    </subcellularLocation>
</comment>
<comment type="similarity">
    <text evidence="1">Belongs to the peptidase S1 family.</text>
</comment>
<evidence type="ECO:0000305" key="1"/>
<evidence type="ECO:0007829" key="2">
    <source>
        <dbReference type="PDB" id="2SFA"/>
    </source>
</evidence>
<accession>P41140</accession>
<name>SFAS2_STRFR</name>
<organism>
    <name type="scientific">Streptomyces fradiae</name>
    <name type="common">Streptomyces roseoflavus</name>
    <dbReference type="NCBI Taxonomy" id="1906"/>
    <lineage>
        <taxon>Bacteria</taxon>
        <taxon>Bacillati</taxon>
        <taxon>Actinomycetota</taxon>
        <taxon>Actinomycetes</taxon>
        <taxon>Kitasatosporales</taxon>
        <taxon>Streptomycetaceae</taxon>
        <taxon>Streptomyces</taxon>
    </lineage>
</organism>
<sequence length="174" mass="17179">IAGGEAIYAAGGGRCSLGFNVRSSSGATYALTAGHCTEIASTWYTNSGQTSLLGTRAGTSFPGNDYGLIRHSNASAADGRVYLYNGSYRDITGAGNAYVGQTVQRSGSTTGLHSGRVTGLNATVNYGGGDIVSGLIQTNVCAEPGDSGGALFAGSTALGLTSGGSGNCRTGGTT</sequence>
<protein>
    <recommendedName>
        <fullName>Serine protease 2</fullName>
        <ecNumber>3.4.21.-</ecNumber>
    </recommendedName>
    <alternativeName>
        <fullName>SFase-2</fullName>
    </alternativeName>
</protein>
<proteinExistence type="evidence at protein level"/>
<dbReference type="EC" id="3.4.21.-"/>
<dbReference type="EMBL" id="S68947">
    <property type="protein sequence ID" value="AAB30080.2"/>
    <property type="molecule type" value="Genomic_DNA"/>
</dbReference>
<dbReference type="PDB" id="2SFA">
    <property type="method" value="X-ray"/>
    <property type="resolution" value="1.60 A"/>
    <property type="chains" value="A=1-174"/>
</dbReference>
<dbReference type="PDBsum" id="2SFA"/>
<dbReference type="SMR" id="P41140"/>
<dbReference type="MEROPS" id="S01.431"/>
<dbReference type="EvolutionaryTrace" id="P41140"/>
<dbReference type="GO" id="GO:0005576">
    <property type="term" value="C:extracellular region"/>
    <property type="evidence" value="ECO:0007669"/>
    <property type="project" value="UniProtKB-SubCell"/>
</dbReference>
<dbReference type="GO" id="GO:0004252">
    <property type="term" value="F:serine-type endopeptidase activity"/>
    <property type="evidence" value="ECO:0007669"/>
    <property type="project" value="InterPro"/>
</dbReference>
<dbReference type="GO" id="GO:0006508">
    <property type="term" value="P:proteolysis"/>
    <property type="evidence" value="ECO:0007669"/>
    <property type="project" value="UniProtKB-KW"/>
</dbReference>
<dbReference type="CDD" id="cd21112">
    <property type="entry name" value="alphaLP-like"/>
    <property type="match status" value="1"/>
</dbReference>
<dbReference type="Gene3D" id="2.40.10.10">
    <property type="entry name" value="Trypsin-like serine proteases"/>
    <property type="match status" value="2"/>
</dbReference>
<dbReference type="InterPro" id="IPR001316">
    <property type="entry name" value="Pept_S1A_streptogrisin"/>
</dbReference>
<dbReference type="InterPro" id="IPR009003">
    <property type="entry name" value="Peptidase_S1_PA"/>
</dbReference>
<dbReference type="InterPro" id="IPR043504">
    <property type="entry name" value="Peptidase_S1_PA_chymotrypsin"/>
</dbReference>
<dbReference type="InterPro" id="IPR001254">
    <property type="entry name" value="Trypsin_dom"/>
</dbReference>
<dbReference type="InterPro" id="IPR018114">
    <property type="entry name" value="TRYPSIN_HIS"/>
</dbReference>
<dbReference type="InterPro" id="IPR033116">
    <property type="entry name" value="TRYPSIN_SER"/>
</dbReference>
<dbReference type="Pfam" id="PF00089">
    <property type="entry name" value="Trypsin"/>
    <property type="match status" value="1"/>
</dbReference>
<dbReference type="PRINTS" id="PR00861">
    <property type="entry name" value="ALYTICPTASE"/>
</dbReference>
<dbReference type="SUPFAM" id="SSF50494">
    <property type="entry name" value="Trypsin-like serine proteases"/>
    <property type="match status" value="1"/>
</dbReference>
<dbReference type="PROSITE" id="PS00134">
    <property type="entry name" value="TRYPSIN_HIS"/>
    <property type="match status" value="1"/>
</dbReference>
<dbReference type="PROSITE" id="PS00135">
    <property type="entry name" value="TRYPSIN_SER"/>
    <property type="match status" value="1"/>
</dbReference>
<feature type="chain" id="PRO_0000093857" description="Serine protease 2">
    <location>
        <begin position="1"/>
        <end position="174"/>
    </location>
</feature>
<feature type="active site" description="Charge relay system">
    <location>
        <position position="35"/>
    </location>
</feature>
<feature type="active site" description="Charge relay system">
    <location>
        <position position="65"/>
    </location>
</feature>
<feature type="active site" description="Charge relay system">
    <location>
        <position position="147"/>
    </location>
</feature>
<feature type="disulfide bond">
    <location>
        <begin position="15"/>
        <end position="36"/>
    </location>
</feature>
<feature type="disulfide bond">
    <location>
        <begin position="141"/>
        <end position="168"/>
    </location>
</feature>
<feature type="strand" evidence="2">
    <location>
        <begin position="6"/>
        <end position="9"/>
    </location>
</feature>
<feature type="strand" evidence="2">
    <location>
        <begin position="14"/>
        <end position="16"/>
    </location>
</feature>
<feature type="strand" evidence="2">
    <location>
        <begin position="19"/>
        <end position="23"/>
    </location>
</feature>
<feature type="strand" evidence="2">
    <location>
        <begin position="28"/>
        <end position="32"/>
    </location>
</feature>
<feature type="helix" evidence="2">
    <location>
        <begin position="34"/>
        <end position="37"/>
    </location>
</feature>
<feature type="strand" evidence="2">
    <location>
        <begin position="41"/>
        <end position="46"/>
    </location>
</feature>
<feature type="strand" evidence="2">
    <location>
        <begin position="51"/>
        <end position="60"/>
    </location>
</feature>
<feature type="strand" evidence="2">
    <location>
        <begin position="62"/>
        <end position="64"/>
    </location>
</feature>
<feature type="strand" evidence="2">
    <location>
        <begin position="66"/>
        <end position="72"/>
    </location>
</feature>
<feature type="helix" evidence="2">
    <location>
        <begin position="74"/>
        <end position="76"/>
    </location>
</feature>
<feature type="strand" evidence="2">
    <location>
        <begin position="79"/>
        <end position="82"/>
    </location>
</feature>
<feature type="strand" evidence="2">
    <location>
        <begin position="84"/>
        <end position="86"/>
    </location>
</feature>
<feature type="strand" evidence="2">
    <location>
        <begin position="88"/>
        <end position="90"/>
    </location>
</feature>
<feature type="strand" evidence="2">
    <location>
        <begin position="102"/>
        <end position="107"/>
    </location>
</feature>
<feature type="turn" evidence="2">
    <location>
        <begin position="108"/>
        <end position="110"/>
    </location>
</feature>
<feature type="strand" evidence="2">
    <location>
        <begin position="111"/>
        <end position="125"/>
    </location>
</feature>
<feature type="strand" evidence="2">
    <location>
        <begin position="131"/>
        <end position="139"/>
    </location>
</feature>
<feature type="strand" evidence="2">
    <location>
        <begin position="150"/>
        <end position="153"/>
    </location>
</feature>
<feature type="strand" evidence="2">
    <location>
        <begin position="156"/>
        <end position="167"/>
    </location>
</feature>
<feature type="turn" evidence="2">
    <location>
        <begin position="168"/>
        <end position="170"/>
    </location>
</feature>
<feature type="strand" evidence="2">
    <location>
        <begin position="171"/>
        <end position="174"/>
    </location>
</feature>
<reference key="1">
    <citation type="journal article" date="1994" name="Eur. J. Biochem.">
        <title>Purification, characterization, primary structure, crystallization and preliminary crystallographic study of a serine proteinase from Streptomyces fradiae ATCC 14544.</title>
        <authorList>
            <person name="Kitadokoro K."/>
            <person name="Tsuzuki H."/>
            <person name="Nakamura E."/>
            <person name="Sato T."/>
            <person name="Teraoka H."/>
        </authorList>
    </citation>
    <scope>NUCLEOTIDE SEQUENCE [GENOMIC DNA]</scope>
    <source>
        <strain>ATCC 14544 / DSM 40758 / IMRU 3739 / NCIMB 11726 / NRRL B-2841</strain>
    </source>
</reference>
<reference key="2">
    <citation type="journal article" date="1994" name="Eur. J. Biochem.">
        <title>Crystal structure analysis of a serine proteinase from Streptomyces fradiae at 0.16-nm resolution and molecular modeling of an acidic-amino-acid-specific proteinase.</title>
        <authorList>
            <person name="Kitadokoro K."/>
            <person name="Tsuzuki H."/>
            <person name="Okamoto H."/>
            <person name="Sato T."/>
        </authorList>
    </citation>
    <scope>X-RAY CRYSTALLOGRAPHY (1.6 ANGSTROMS)</scope>
    <source>
        <strain>ATCC 14544 / DSM 40758 / IMRU 3739 / NCIMB 11726 / NRRL B-2841</strain>
    </source>
</reference>